<evidence type="ECO:0000250" key="1">
    <source>
        <dbReference type="UniProtKB" id="P01602"/>
    </source>
</evidence>
<evidence type="ECO:0000255" key="2">
    <source>
        <dbReference type="PROSITE-ProRule" id="PRU00114"/>
    </source>
</evidence>
<evidence type="ECO:0000269" key="3">
    <source>
    </source>
</evidence>
<evidence type="ECO:0000303" key="4">
    <source>
    </source>
</evidence>
<evidence type="ECO:0000303" key="5">
    <source>
    </source>
</evidence>
<evidence type="ECO:0000303" key="6">
    <source>
    </source>
</evidence>
<evidence type="ECO:0000303" key="7">
    <source>
    </source>
</evidence>
<evidence type="ECO:0000303" key="8">
    <source>
    </source>
</evidence>
<evidence type="ECO:0000303" key="9">
    <source ref="4"/>
</evidence>
<evidence type="ECO:0000305" key="10"/>
<evidence type="ECO:0000305" key="11">
    <source>
    </source>
</evidence>
<comment type="function">
    <text evidence="5 6 7 8">V region of the variable domain of immunoglobulin light chains that participates in the antigen recognition (PubMed:24600447). Immunoglobulins, also known as antibodies, are membrane-bound or secreted glycoproteins produced by B lymphocytes. In the recognition phase of humoral immunity, the membrane-bound immunoglobulins serve as receptors which, upon binding of a specific antigen, trigger the clonal expansion and differentiation of B lymphocytes into immunoglobulins-secreting plasma cells. Secreted immunoglobulins mediate the effector phase of humoral immunity, which results in the elimination of bound antigens (PubMed:20176268, PubMed:22158414). The antigen binding site is formed by the variable domain of one heavy chain, together with that of its associated light chain. Thus, each immunoglobulin has two antigen binding sites with remarkable affinity for a particular antigen. The variable domains are assembled by a process called V-(D)-J rearrangement and can then be subjected to somatic hypermutations which, after exposure to antigen and selection, allow affinity maturation for a particular antigen (PubMed:17576170, PubMed:20176268).</text>
</comment>
<comment type="subunit">
    <text evidence="6">Immunoglobulins are composed of two identical heavy chains and two identical light chains; disulfide-linked.</text>
</comment>
<comment type="subcellular location">
    <subcellularLocation>
        <location evidence="6 7">Secreted</location>
    </subcellularLocation>
    <subcellularLocation>
        <location evidence="6 7">Cell membrane</location>
    </subcellularLocation>
</comment>
<comment type="polymorphism">
    <text>There are several alleles. The sequence shown is that of IMGT allele IGKV1D-12*02.</text>
</comment>
<comment type="caution">
    <text evidence="10">For an example of a full-length immunoglobulin kappa light chain see AC P0DOX7.</text>
</comment>
<keyword id="KW-1064">Adaptive immunity</keyword>
<keyword id="KW-1003">Cell membrane</keyword>
<keyword id="KW-0903">Direct protein sequencing</keyword>
<keyword id="KW-1015">Disulfide bond</keyword>
<keyword id="KW-0391">Immunity</keyword>
<keyword id="KW-1280">Immunoglobulin</keyword>
<keyword id="KW-0393">Immunoglobulin domain</keyword>
<keyword id="KW-0472">Membrane</keyword>
<keyword id="KW-1185">Reference proteome</keyword>
<keyword id="KW-0964">Secreted</keyword>
<keyword id="KW-0732">Signal</keyword>
<dbReference type="EMBL" id="AC243981">
    <property type="status" value="NOT_ANNOTATED_CDS"/>
    <property type="molecule type" value="Genomic_DNA"/>
</dbReference>
<dbReference type="PIR" id="A01877">
    <property type="entry name" value="K1HUWS"/>
</dbReference>
<dbReference type="EMDB" id="EMD-20947"/>
<dbReference type="EMDB" id="EMD-21648"/>
<dbReference type="EMDB" id="EMD-24403"/>
<dbReference type="EMDB" id="EMD-25794"/>
<dbReference type="EMDB" id="EMD-25797"/>
<dbReference type="EMDB" id="EMD-27765"/>
<dbReference type="EMDB" id="EMD-33133"/>
<dbReference type="EMDB" id="EMD-33150"/>
<dbReference type="EMDB" id="EMD-34226"/>
<dbReference type="EMDB" id="EMD-34410"/>
<dbReference type="EMDB" id="EMD-34411"/>
<dbReference type="EMDB" id="EMD-34654"/>
<dbReference type="EMDB" id="EMD-36372"/>
<dbReference type="SMR" id="P01611"/>
<dbReference type="FunCoup" id="P01611">
    <property type="interactions" value="463"/>
</dbReference>
<dbReference type="IntAct" id="P01611">
    <property type="interactions" value="3"/>
</dbReference>
<dbReference type="IMGT_GENE-DB" id="IGKV1D-12"/>
<dbReference type="BioMuta" id="IGKV1D-12"/>
<dbReference type="DMDM" id="125775"/>
<dbReference type="jPOST" id="P01611"/>
<dbReference type="MassIVE" id="P01611"/>
<dbReference type="Ensembl" id="ENST00000377032.5">
    <property type="protein sequence ID" value="ENSP00000482464.1"/>
    <property type="gene ID" value="ENSG00000278857.1"/>
</dbReference>
<dbReference type="AGR" id="HGNC:5746"/>
<dbReference type="GeneCards" id="IGKV1D-12"/>
<dbReference type="HGNC" id="HGNC:5746">
    <property type="gene designation" value="IGKV1D-12"/>
</dbReference>
<dbReference type="HPA" id="ENSG00000278857">
    <property type="expression patterns" value="Tissue enhanced (intestine, lung, lymphoid tissue)"/>
</dbReference>
<dbReference type="neXtProt" id="NX_P01611"/>
<dbReference type="VEuPathDB" id="HostDB:ENSG00000278857"/>
<dbReference type="GeneTree" id="ENSGT00940000153048"/>
<dbReference type="InParanoid" id="P01611"/>
<dbReference type="OMA" id="TSCDILM"/>
<dbReference type="OrthoDB" id="9629570at2759"/>
<dbReference type="PAN-GO" id="P01611">
    <property type="GO annotations" value="3 GO annotations based on evolutionary models"/>
</dbReference>
<dbReference type="PathwayCommons" id="P01611"/>
<dbReference type="Reactome" id="R-HSA-166663">
    <property type="pathway name" value="Initial triggering of complement"/>
</dbReference>
<dbReference type="Reactome" id="R-HSA-173623">
    <property type="pathway name" value="Classical antibody-mediated complement activation"/>
</dbReference>
<dbReference type="Reactome" id="R-HSA-198933">
    <property type="pathway name" value="Immunoregulatory interactions between a Lymphoid and a non-Lymphoid cell"/>
</dbReference>
<dbReference type="Reactome" id="R-HSA-202733">
    <property type="pathway name" value="Cell surface interactions at the vascular wall"/>
</dbReference>
<dbReference type="Reactome" id="R-HSA-2029481">
    <property type="pathway name" value="FCGR activation"/>
</dbReference>
<dbReference type="Reactome" id="R-HSA-2029482">
    <property type="pathway name" value="Regulation of actin dynamics for phagocytic cup formation"/>
</dbReference>
<dbReference type="Reactome" id="R-HSA-2029485">
    <property type="pathway name" value="Role of phospholipids in phagocytosis"/>
</dbReference>
<dbReference type="Reactome" id="R-HSA-2168880">
    <property type="pathway name" value="Scavenging of heme from plasma"/>
</dbReference>
<dbReference type="Reactome" id="R-HSA-2454202">
    <property type="pathway name" value="Fc epsilon receptor (FCERI) signaling"/>
</dbReference>
<dbReference type="Reactome" id="R-HSA-2730905">
    <property type="pathway name" value="Role of LAT2/NTAL/LAB on calcium mobilization"/>
</dbReference>
<dbReference type="Reactome" id="R-HSA-2871796">
    <property type="pathway name" value="FCERI mediated MAPK activation"/>
</dbReference>
<dbReference type="Reactome" id="R-HSA-2871809">
    <property type="pathway name" value="FCERI mediated Ca+2 mobilization"/>
</dbReference>
<dbReference type="Reactome" id="R-HSA-2871837">
    <property type="pathway name" value="FCERI mediated NF-kB activation"/>
</dbReference>
<dbReference type="Reactome" id="R-HSA-5690714">
    <property type="pathway name" value="CD22 mediated BCR regulation"/>
</dbReference>
<dbReference type="Reactome" id="R-HSA-9664323">
    <property type="pathway name" value="FCGR3A-mediated IL10 synthesis"/>
</dbReference>
<dbReference type="Reactome" id="R-HSA-9664422">
    <property type="pathway name" value="FCGR3A-mediated phagocytosis"/>
</dbReference>
<dbReference type="Reactome" id="R-HSA-9679191">
    <property type="pathway name" value="Potential therapeutics for SARS"/>
</dbReference>
<dbReference type="Reactome" id="R-HSA-977606">
    <property type="pathway name" value="Regulation of Complement cascade"/>
</dbReference>
<dbReference type="Reactome" id="R-HSA-983695">
    <property type="pathway name" value="Antigen activates B Cell Receptor (BCR) leading to generation of second messengers"/>
</dbReference>
<dbReference type="SignaLink" id="P01611"/>
<dbReference type="Pharos" id="P01611">
    <property type="development level" value="Tdark"/>
</dbReference>
<dbReference type="PRO" id="PR:P01611"/>
<dbReference type="Proteomes" id="UP000005640">
    <property type="component" value="Chromosome 2"/>
</dbReference>
<dbReference type="RNAct" id="P01611">
    <property type="molecule type" value="protein"/>
</dbReference>
<dbReference type="Bgee" id="ENSG00000278857">
    <property type="expression patterns" value="Expressed in mucosa of transverse colon and 80 other cell types or tissues"/>
</dbReference>
<dbReference type="GO" id="GO:0072562">
    <property type="term" value="C:blood microparticle"/>
    <property type="evidence" value="ECO:0007005"/>
    <property type="project" value="UniProtKB"/>
</dbReference>
<dbReference type="GO" id="GO:0070062">
    <property type="term" value="C:extracellular exosome"/>
    <property type="evidence" value="ECO:0007005"/>
    <property type="project" value="UniProtKB"/>
</dbReference>
<dbReference type="GO" id="GO:0005576">
    <property type="term" value="C:extracellular region"/>
    <property type="evidence" value="ECO:0000304"/>
    <property type="project" value="Reactome"/>
</dbReference>
<dbReference type="GO" id="GO:0019814">
    <property type="term" value="C:immunoglobulin complex"/>
    <property type="evidence" value="ECO:0000318"/>
    <property type="project" value="GO_Central"/>
</dbReference>
<dbReference type="GO" id="GO:0005886">
    <property type="term" value="C:plasma membrane"/>
    <property type="evidence" value="ECO:0000304"/>
    <property type="project" value="Reactome"/>
</dbReference>
<dbReference type="GO" id="GO:0003823">
    <property type="term" value="F:antigen binding"/>
    <property type="evidence" value="ECO:0000303"/>
    <property type="project" value="UniProtKB"/>
</dbReference>
<dbReference type="GO" id="GO:0002250">
    <property type="term" value="P:adaptive immune response"/>
    <property type="evidence" value="ECO:0007669"/>
    <property type="project" value="UniProtKB-KW"/>
</dbReference>
<dbReference type="GO" id="GO:0006955">
    <property type="term" value="P:immune response"/>
    <property type="evidence" value="ECO:0000318"/>
    <property type="project" value="GO_Central"/>
</dbReference>
<dbReference type="CDD" id="cd04980">
    <property type="entry name" value="IgV_L_kappa"/>
    <property type="match status" value="1"/>
</dbReference>
<dbReference type="FunFam" id="2.60.40.10:FF:000212">
    <property type="entry name" value="Immunoglobulin kappa chain variable 12-38"/>
    <property type="match status" value="1"/>
</dbReference>
<dbReference type="Gene3D" id="2.60.40.10">
    <property type="entry name" value="Immunoglobulins"/>
    <property type="match status" value="1"/>
</dbReference>
<dbReference type="InterPro" id="IPR007110">
    <property type="entry name" value="Ig-like_dom"/>
</dbReference>
<dbReference type="InterPro" id="IPR036179">
    <property type="entry name" value="Ig-like_dom_sf"/>
</dbReference>
<dbReference type="InterPro" id="IPR013783">
    <property type="entry name" value="Ig-like_fold"/>
</dbReference>
<dbReference type="InterPro" id="IPR003599">
    <property type="entry name" value="Ig_sub"/>
</dbReference>
<dbReference type="InterPro" id="IPR013106">
    <property type="entry name" value="Ig_V-set"/>
</dbReference>
<dbReference type="InterPro" id="IPR050150">
    <property type="entry name" value="IgV_Light_Chain"/>
</dbReference>
<dbReference type="PANTHER" id="PTHR23267">
    <property type="entry name" value="IMMUNOGLOBULIN LIGHT CHAIN"/>
    <property type="match status" value="1"/>
</dbReference>
<dbReference type="Pfam" id="PF07686">
    <property type="entry name" value="V-set"/>
    <property type="match status" value="1"/>
</dbReference>
<dbReference type="SMART" id="SM00409">
    <property type="entry name" value="IG"/>
    <property type="match status" value="1"/>
</dbReference>
<dbReference type="SMART" id="SM00406">
    <property type="entry name" value="IGv"/>
    <property type="match status" value="1"/>
</dbReference>
<dbReference type="SUPFAM" id="SSF48726">
    <property type="entry name" value="Immunoglobulin"/>
    <property type="match status" value="1"/>
</dbReference>
<dbReference type="PROSITE" id="PS50835">
    <property type="entry name" value="IG_LIKE"/>
    <property type="match status" value="1"/>
</dbReference>
<name>KVD12_HUMAN</name>
<reference key="1">
    <citation type="journal article" date="2005" name="Nature">
        <title>Generation and annotation of the DNA sequences of human chromosomes 2 and 4.</title>
        <authorList>
            <person name="Hillier L.W."/>
            <person name="Graves T.A."/>
            <person name="Fulton R.S."/>
            <person name="Fulton L.A."/>
            <person name="Pepin K.H."/>
            <person name="Minx P."/>
            <person name="Wagner-McPherson C."/>
            <person name="Layman D."/>
            <person name="Wylie K."/>
            <person name="Sekhon M."/>
            <person name="Becker M.C."/>
            <person name="Fewell G.A."/>
            <person name="Delehaunty K.D."/>
            <person name="Miner T.L."/>
            <person name="Nash W.E."/>
            <person name="Kremitzki C."/>
            <person name="Oddy L."/>
            <person name="Du H."/>
            <person name="Sun H."/>
            <person name="Bradshaw-Cordum H."/>
            <person name="Ali J."/>
            <person name="Carter J."/>
            <person name="Cordes M."/>
            <person name="Harris A."/>
            <person name="Isak A."/>
            <person name="van Brunt A."/>
            <person name="Nguyen C."/>
            <person name="Du F."/>
            <person name="Courtney L."/>
            <person name="Kalicki J."/>
            <person name="Ozersky P."/>
            <person name="Abbott S."/>
            <person name="Armstrong J."/>
            <person name="Belter E.A."/>
            <person name="Caruso L."/>
            <person name="Cedroni M."/>
            <person name="Cotton M."/>
            <person name="Davidson T."/>
            <person name="Desai A."/>
            <person name="Elliott G."/>
            <person name="Erb T."/>
            <person name="Fronick C."/>
            <person name="Gaige T."/>
            <person name="Haakenson W."/>
            <person name="Haglund K."/>
            <person name="Holmes A."/>
            <person name="Harkins R."/>
            <person name="Kim K."/>
            <person name="Kruchowski S.S."/>
            <person name="Strong C.M."/>
            <person name="Grewal N."/>
            <person name="Goyea E."/>
            <person name="Hou S."/>
            <person name="Levy A."/>
            <person name="Martinka S."/>
            <person name="Mead K."/>
            <person name="McLellan M.D."/>
            <person name="Meyer R."/>
            <person name="Randall-Maher J."/>
            <person name="Tomlinson C."/>
            <person name="Dauphin-Kohlberg S."/>
            <person name="Kozlowicz-Reilly A."/>
            <person name="Shah N."/>
            <person name="Swearengen-Shahid S."/>
            <person name="Snider J."/>
            <person name="Strong J.T."/>
            <person name="Thompson J."/>
            <person name="Yoakum M."/>
            <person name="Leonard S."/>
            <person name="Pearman C."/>
            <person name="Trani L."/>
            <person name="Radionenko M."/>
            <person name="Waligorski J.E."/>
            <person name="Wang C."/>
            <person name="Rock S.M."/>
            <person name="Tin-Wollam A.-M."/>
            <person name="Maupin R."/>
            <person name="Latreille P."/>
            <person name="Wendl M.C."/>
            <person name="Yang S.-P."/>
            <person name="Pohl C."/>
            <person name="Wallis J.W."/>
            <person name="Spieth J."/>
            <person name="Bieri T.A."/>
            <person name="Berkowicz N."/>
            <person name="Nelson J.O."/>
            <person name="Osborne J."/>
            <person name="Ding L."/>
            <person name="Meyer R."/>
            <person name="Sabo A."/>
            <person name="Shotland Y."/>
            <person name="Sinha P."/>
            <person name="Wohldmann P.E."/>
            <person name="Cook L.L."/>
            <person name="Hickenbotham M.T."/>
            <person name="Eldred J."/>
            <person name="Williams D."/>
            <person name="Jones T.A."/>
            <person name="She X."/>
            <person name="Ciccarelli F.D."/>
            <person name="Izaurralde E."/>
            <person name="Taylor J."/>
            <person name="Schmutz J."/>
            <person name="Myers R.M."/>
            <person name="Cox D.R."/>
            <person name="Huang X."/>
            <person name="McPherson J.D."/>
            <person name="Mardis E.R."/>
            <person name="Clifton S.W."/>
            <person name="Warren W.C."/>
            <person name="Chinwalla A.T."/>
            <person name="Eddy S.R."/>
            <person name="Marra M.A."/>
            <person name="Ovcharenko I."/>
            <person name="Furey T.S."/>
            <person name="Miller W."/>
            <person name="Eichler E.E."/>
            <person name="Bork P."/>
            <person name="Suyama M."/>
            <person name="Torrents D."/>
            <person name="Waterston R.H."/>
            <person name="Wilson R.K."/>
        </authorList>
    </citation>
    <scope>NUCLEOTIDE SEQUENCE [LARGE SCALE GENOMIC DNA] (IMGT ALLELE IGKV1D-12*02)</scope>
</reference>
<reference key="2">
    <citation type="journal article" date="1980" name="Hoppe-Seyler's Z. Physiol. Chem.">
        <title>Preparative separation of the tryptic hydrolysate of a protein by high-pressure liquid chromatography. The primary structure of a monoclonal L-chain of k-type, subgroup I (Bence-Jones protein Wes).</title>
        <authorList>
            <person name="Kratzin H."/>
            <person name="Yang C."/>
            <person name="Krusche J.U."/>
            <person name="Hilschmann N."/>
        </authorList>
    </citation>
    <scope>PROTEIN SEQUENCE OF 23-117</scope>
</reference>
<reference key="3">
    <citation type="journal article" date="2001" name="Exp. Clin. Immunogenet.">
        <title>Nomenclature of the human immunoglobulin kappa (IGK) genes.</title>
        <authorList>
            <person name="Lefranc M.P."/>
        </authorList>
    </citation>
    <scope>NOMEMCLATURE</scope>
</reference>
<reference key="4">
    <citation type="book" date="2001" name="The Immunoglobulin FactsBook.">
        <title>The Immunoglobulin FactsBook.</title>
        <editorList>
            <person name="Lefranc M.P."/>
            <person name="Lefranc G."/>
        </editorList>
        <authorList>
            <person name="Lefranc M.P."/>
            <person name="Lefranc G."/>
        </authorList>
    </citation>
    <scope>NOMENCLATURE</scope>
</reference>
<reference key="5">
    <citation type="journal article" date="2007" name="Annu. Rev. Genet.">
        <title>Immunoglobulin somatic hypermutation.</title>
        <authorList>
            <person name="Teng G."/>
            <person name="Papavasiliou F.N."/>
        </authorList>
    </citation>
    <scope>REVIEW ON SOMATIC HYPERMUTATION</scope>
</reference>
<reference key="6">
    <citation type="journal article" date="2010" name="J. Allergy Clin. Immunol.">
        <title>Structure and function of immunoglobulins.</title>
        <authorList>
            <person name="Schroeder H.W. Jr."/>
            <person name="Cavacini L."/>
        </authorList>
    </citation>
    <scope>REVIEW ON IMMUNOGLOBULINS</scope>
</reference>
<reference key="7">
    <citation type="journal article" date="2012" name="Nat. Rev. Immunol.">
        <title>Molecular programming of B cell memory.</title>
        <authorList>
            <person name="McHeyzer-Williams M."/>
            <person name="Okitsu S."/>
            <person name="Wang N."/>
            <person name="McHeyzer-Williams L."/>
        </authorList>
    </citation>
    <scope>REVIEW ON FUNCTION</scope>
</reference>
<reference key="8">
    <citation type="journal article" date="2014" name="Front. Immunol.">
        <title>Immunoglobulin and T Cell Receptor Genes: IMGT((R)) and the Birth and Rise of Immunoinformatics.</title>
        <authorList>
            <person name="Lefranc M.P."/>
        </authorList>
    </citation>
    <scope>NOMENCLATURE</scope>
</reference>
<gene>
    <name evidence="4 9" type="primary">IGKV1D-12</name>
</gene>
<feature type="signal peptide" evidence="3">
    <location>
        <begin position="1"/>
        <end position="22"/>
    </location>
</feature>
<feature type="chain" id="PRO_0000059753" description="Immunoglobulin kappa variable 1D-12" evidence="3">
    <location>
        <begin position="23"/>
        <end position="117"/>
    </location>
</feature>
<feature type="domain" description="Ig-like" evidence="2">
    <location>
        <begin position="24"/>
        <end position="117" status="greater than"/>
    </location>
</feature>
<feature type="region of interest" description="Framework-1" evidence="1">
    <location>
        <begin position="23"/>
        <end position="45"/>
    </location>
</feature>
<feature type="region of interest" description="Complementarity-determining-1" evidence="1">
    <location>
        <begin position="46"/>
        <end position="56"/>
    </location>
</feature>
<feature type="region of interest" description="Framework-2" evidence="1">
    <location>
        <begin position="57"/>
        <end position="71"/>
    </location>
</feature>
<feature type="region of interest" description="Complementarity-determining-2" evidence="1">
    <location>
        <begin position="72"/>
        <end position="78"/>
    </location>
</feature>
<feature type="region of interest" description="Framework-3" evidence="1">
    <location>
        <begin position="79"/>
        <end position="110"/>
    </location>
</feature>
<feature type="region of interest" description="Complementarity-determining-3" evidence="1">
    <location>
        <begin position="111"/>
        <end position="117" status="greater than"/>
    </location>
</feature>
<feature type="disulfide bond" evidence="2">
    <location>
        <begin position="45"/>
        <end position="110"/>
    </location>
</feature>
<feature type="sequence conflict" description="In Ref. 2; AA sequence." evidence="10" ref="2">
    <original>G</original>
    <variation>D</variation>
    <location>
        <position position="50"/>
    </location>
</feature>
<feature type="sequence conflict" description="In Ref. 2; AA sequence." evidence="10" ref="2">
    <original>S</original>
    <variation>H</variation>
    <location>
        <position position="53"/>
    </location>
</feature>
<feature type="sequence conflict" description="In Ref. 2; AA sequence." evidence="10" ref="2">
    <original>P</original>
    <variation>S</variation>
    <location>
        <position position="62"/>
    </location>
</feature>
<feature type="sequence conflict" description="In Ref. 2; AA sequence." evidence="10" ref="2">
    <original>A</original>
    <variation>S</variation>
    <location>
        <position position="72"/>
    </location>
</feature>
<feature type="sequence conflict" description="In Ref. 2; AA sequence." evidence="10" ref="2">
    <original>QS</original>
    <variation>EN</variation>
    <location>
        <begin position="77"/>
        <end position="78"/>
    </location>
</feature>
<feature type="sequence conflict" description="In Ref. 2; AA sequence." evidence="10" ref="2">
    <original>D</original>
    <variation>E</variation>
    <location>
        <position position="92"/>
    </location>
</feature>
<feature type="sequence conflict" description="In Ref. 2; AA sequence." evidence="10" ref="2">
    <original>Y</original>
    <variation>F</variation>
    <location>
        <position position="109"/>
    </location>
</feature>
<feature type="sequence conflict" description="In Ref. 2; AA sequence." evidence="10" ref="2">
    <original>NSF</original>
    <variation>HSV</variation>
    <location>
        <begin position="114"/>
        <end position="116"/>
    </location>
</feature>
<feature type="non-terminal residue">
    <location>
        <position position="117"/>
    </location>
</feature>
<organism>
    <name type="scientific">Homo sapiens</name>
    <name type="common">Human</name>
    <dbReference type="NCBI Taxonomy" id="9606"/>
    <lineage>
        <taxon>Eukaryota</taxon>
        <taxon>Metazoa</taxon>
        <taxon>Chordata</taxon>
        <taxon>Craniata</taxon>
        <taxon>Vertebrata</taxon>
        <taxon>Euteleostomi</taxon>
        <taxon>Mammalia</taxon>
        <taxon>Eutheria</taxon>
        <taxon>Euarchontoglires</taxon>
        <taxon>Primates</taxon>
        <taxon>Haplorrhini</taxon>
        <taxon>Catarrhini</taxon>
        <taxon>Hominidae</taxon>
        <taxon>Homo</taxon>
    </lineage>
</organism>
<protein>
    <recommendedName>
        <fullName evidence="4 9">Immunoglobulin kappa variable 1D-12</fullName>
    </recommendedName>
    <alternativeName>
        <fullName evidence="11">Ig kappa chain V-I region Wes</fullName>
    </alternativeName>
</protein>
<sequence length="117" mass="12620">MDMMVPAQLLGLLLLWFPGSRCDIQMTQSPSSVSASVGDRVTITCRASQGISSWLAWYQQKPGKAPKLLIYAASSLQSGVPSRFSGSGSGTDFTLTISSLQPEDFATYYCQQANSFP</sequence>
<accession>P01611</accession>
<accession>A0A0B4J2E7</accession>
<proteinExistence type="evidence at protein level"/>